<name>UPE62_UPEIN</name>
<feature type="peptide" id="PRO_0000043864" description="Uperin-6.2">
    <location>
        <begin position="1"/>
        <end position="30"/>
    </location>
</feature>
<sequence length="30" mass="3261">GLAGAISSVLDKLKQSQLIKNYAKKLGYPR</sequence>
<protein>
    <recommendedName>
        <fullName>Uperin-6.2</fullName>
    </recommendedName>
</protein>
<dbReference type="SMR" id="P82038"/>
<dbReference type="GO" id="GO:0005576">
    <property type="term" value="C:extracellular region"/>
    <property type="evidence" value="ECO:0007669"/>
    <property type="project" value="UniProtKB-SubCell"/>
</dbReference>
<dbReference type="GO" id="GO:0006952">
    <property type="term" value="P:defense response"/>
    <property type="evidence" value="ECO:0007669"/>
    <property type="project" value="UniProtKB-KW"/>
</dbReference>
<keyword id="KW-0878">Amphibian defense peptide</keyword>
<keyword id="KW-0903">Direct protein sequencing</keyword>
<keyword id="KW-0964">Secreted</keyword>
<accession>P82038</accession>
<comment type="subcellular location">
    <subcellularLocation>
        <location>Secreted</location>
    </subcellularLocation>
</comment>
<comment type="tissue specificity">
    <text>Expressed by the skin dorsal glands.</text>
</comment>
<comment type="mass spectrometry" mass="3261.85" method="MALDI" evidence="1"/>
<organism>
    <name type="scientific">Uperoleia inundata</name>
    <name type="common">Floodplain toadlet</name>
    <dbReference type="NCBI Taxonomy" id="104953"/>
    <lineage>
        <taxon>Eukaryota</taxon>
        <taxon>Metazoa</taxon>
        <taxon>Chordata</taxon>
        <taxon>Craniata</taxon>
        <taxon>Vertebrata</taxon>
        <taxon>Euteleostomi</taxon>
        <taxon>Amphibia</taxon>
        <taxon>Batrachia</taxon>
        <taxon>Anura</taxon>
        <taxon>Neobatrachia</taxon>
        <taxon>Myobatrachoidea</taxon>
        <taxon>Myobatrachidae</taxon>
        <taxon>Myobatrachinae</taxon>
        <taxon>Uperoleia</taxon>
    </lineage>
</organism>
<reference key="1">
    <citation type="journal article" date="1996" name="Aust. J. Chem.">
        <title>Novel uperin peptides from the dorsal glands of the australian floodplain toadlet Uperoleia inundata.</title>
        <authorList>
            <person name="Bradford A.M."/>
            <person name="Raftery M.J."/>
            <person name="Bowie J.H."/>
            <person name="Tyler M.J."/>
            <person name="Wallace J.C."/>
            <person name="Adams G.W."/>
            <person name="Severini C."/>
        </authorList>
    </citation>
    <scope>PROTEIN SEQUENCE</scope>
    <scope>MASS SPECTROMETRY</scope>
    <source>
        <tissue>Skin secretion</tissue>
    </source>
</reference>
<proteinExistence type="evidence at protein level"/>
<evidence type="ECO:0000269" key="1">
    <source ref="1"/>
</evidence>